<feature type="chain" id="PRO_0000419412" description="Protein PA-X">
    <location>
        <begin position="1"/>
        <end position="252"/>
    </location>
</feature>
<feature type="active site" evidence="2">
    <location>
        <position position="80"/>
    </location>
</feature>
<feature type="active site" evidence="2">
    <location>
        <position position="108"/>
    </location>
</feature>
<feature type="site" description="Important for efficient shutoff activity and nuclear localization" evidence="4">
    <location>
        <position position="195"/>
    </location>
</feature>
<feature type="site" description="Important for efficient shutoff activity and nuclear localization" evidence="4">
    <location>
        <position position="198"/>
    </location>
</feature>
<feature type="site" description="Important for efficient shutoff activity and nuclear localization" evidence="4">
    <location>
        <position position="199"/>
    </location>
</feature>
<feature type="site" description="Important for efficient shutoff activity" evidence="3">
    <location>
        <position position="202"/>
    </location>
</feature>
<feature type="site" description="Important for efficient shutoff activity" evidence="3">
    <location>
        <position position="203"/>
    </location>
</feature>
<feature type="site" description="Important for efficient shutoff activity" evidence="3">
    <location>
        <position position="206"/>
    </location>
</feature>
<proteinExistence type="inferred from homology"/>
<reference key="1">
    <citation type="journal article" date="1989" name="Virology">
        <title>Evolutionary pathways of the PA genes of influenza A viruses.</title>
        <authorList>
            <person name="Okazaki K."/>
            <person name="Kawaoka Y."/>
            <person name="Webster R.G."/>
        </authorList>
    </citation>
    <scope>NUCLEOTIDE SEQUENCE [GENOMIC RNA]</scope>
</reference>
<dbReference type="EMBL" id="M26080">
    <property type="status" value="NOT_ANNOTATED_CDS"/>
    <property type="molecule type" value="Genomic_RNA"/>
</dbReference>
<dbReference type="SMR" id="P0DJU9"/>
<dbReference type="IntAct" id="P0DJU9">
    <property type="interactions" value="1"/>
</dbReference>
<dbReference type="GO" id="GO:0003723">
    <property type="term" value="F:RNA binding"/>
    <property type="evidence" value="ECO:0007669"/>
    <property type="project" value="InterPro"/>
</dbReference>
<dbReference type="GO" id="GO:0039694">
    <property type="term" value="P:viral RNA genome replication"/>
    <property type="evidence" value="ECO:0007669"/>
    <property type="project" value="InterPro"/>
</dbReference>
<dbReference type="GO" id="GO:0075523">
    <property type="term" value="P:viral translational frameshifting"/>
    <property type="evidence" value="ECO:0007669"/>
    <property type="project" value="UniProtKB-KW"/>
</dbReference>
<dbReference type="FunFam" id="3.40.91.90:FF:000001">
    <property type="entry name" value="Polymerase acidic protein"/>
    <property type="match status" value="1"/>
</dbReference>
<dbReference type="Gene3D" id="3.40.91.90">
    <property type="entry name" value="Influenza RNA-dependent RNA polymerase subunit PA, endonuclease domain"/>
    <property type="match status" value="1"/>
</dbReference>
<dbReference type="InterPro" id="IPR001009">
    <property type="entry name" value="PA/PA-X"/>
</dbReference>
<dbReference type="InterPro" id="IPR038372">
    <property type="entry name" value="PA/PA-X_sf"/>
</dbReference>
<dbReference type="Pfam" id="PF00603">
    <property type="entry name" value="Flu_PA"/>
    <property type="match status" value="1"/>
</dbReference>
<name>PAX_I78A9</name>
<accession>P0DJU9</accession>
<sequence length="252" mass="29341">MEDFVRQCFNPMIVELAEKAMKEYGEDPKIETNKFAAICTHLEICFMYSDFHFIDERGESIIVESGDPNALLKHRFEIIEGRDRTMAWTVVNSICNTTGVEKPKLLPDLYDYKENRFIEIGVTRREVHIYYLEKANKIKSEKTHIHIFSFTGEEMATKADYTLDEESRARIKTRLFTIRQEMASRGLWDSFVSPREAKRQLKKDLKSQEPCAGLPTKVSHRTSPALKTLEPMWMDSNRTAALRASFLKCQKK</sequence>
<evidence type="ECO:0000250" key="1">
    <source>
        <dbReference type="UniProtKB" id="P0CK64"/>
    </source>
</evidence>
<evidence type="ECO:0000250" key="2">
    <source>
        <dbReference type="UniProtKB" id="P0CK68"/>
    </source>
</evidence>
<evidence type="ECO:0000250" key="3">
    <source>
        <dbReference type="UniProtKB" id="P0DJW8"/>
    </source>
</evidence>
<evidence type="ECO:0000250" key="4">
    <source>
        <dbReference type="UniProtKB" id="P0DXO5"/>
    </source>
</evidence>
<evidence type="ECO:0000305" key="5"/>
<organismHost>
    <name type="scientific">Aves</name>
    <dbReference type="NCBI Taxonomy" id="8782"/>
</organismHost>
<organismHost>
    <name type="scientific">Cetacea</name>
    <name type="common">whales</name>
    <dbReference type="NCBI Taxonomy" id="9721"/>
</organismHost>
<organismHost>
    <name type="scientific">Homo sapiens</name>
    <name type="common">Human</name>
    <dbReference type="NCBI Taxonomy" id="9606"/>
</organismHost>
<organismHost>
    <name type="scientific">Phocidae</name>
    <name type="common">true seals</name>
    <dbReference type="NCBI Taxonomy" id="9709"/>
</organismHost>
<organismHost>
    <name type="scientific">Sus scrofa</name>
    <name type="common">Pig</name>
    <dbReference type="NCBI Taxonomy" id="9823"/>
</organismHost>
<gene>
    <name type="primary">PA</name>
</gene>
<keyword id="KW-1132">Decay of host mRNAs by virus</keyword>
<keyword id="KW-1262">Eukaryotic host gene expression shutoff by virus</keyword>
<keyword id="KW-1035">Host cytoplasm</keyword>
<keyword id="KW-1190">Host gene expression shutoff by virus</keyword>
<keyword id="KW-1192">Host mRNA suppression by virus</keyword>
<keyword id="KW-1048">Host nucleus</keyword>
<keyword id="KW-0945">Host-virus interaction</keyword>
<keyword id="KW-0688">Ribosomal frameshifting</keyword>
<protein>
    <recommendedName>
        <fullName>Protein PA-X</fullName>
    </recommendedName>
</protein>
<organism>
    <name type="scientific">Influenza A virus (strain A/Swine/Hong Kong/81/1978 H3N2)</name>
    <dbReference type="NCBI Taxonomy" id="384484"/>
    <lineage>
        <taxon>Viruses</taxon>
        <taxon>Riboviria</taxon>
        <taxon>Orthornavirae</taxon>
        <taxon>Negarnaviricota</taxon>
        <taxon>Polyploviricotina</taxon>
        <taxon>Insthoviricetes</taxon>
        <taxon>Articulavirales</taxon>
        <taxon>Orthomyxoviridae</taxon>
        <taxon>Alphainfluenzavirus</taxon>
        <taxon>Alphainfluenzavirus influenzae</taxon>
        <taxon>Influenza A virus</taxon>
    </lineage>
</organism>
<comment type="function">
    <text evidence="1 4">Plays a major role in the shutoff of the host protein expression by cleaving mRNAs probably via an endonuclease activity. This host shutoff allows the virus to escape from the host antiviral response (By similarity). Hijacks host RNA splicing machinery to selectively target host RNAs containing introns for destruction. This may explain the preferential degradation of RNAs that have undergone co- or post-transcriptional processing (By similarity).</text>
</comment>
<comment type="subcellular location">
    <subcellularLocation>
        <location evidence="4">Host cytoplasm</location>
    </subcellularLocation>
    <subcellularLocation>
        <location evidence="4">Host nucleus</location>
    </subcellularLocation>
</comment>
<comment type="alternative products">
    <event type="ribosomal frameshifting"/>
    <isoform>
        <id>P0DJU9-1</id>
        <name>PA-X</name>
        <sequence type="displayed"/>
    </isoform>
    <isoform>
        <id>P13173-1</id>
        <name>PA</name>
        <sequence type="external"/>
    </isoform>
</comment>
<comment type="domain">
    <text evidence="1 4">The probable endonuclease active site in the N-terminus and the basic amino acid cluster in the C-terminus are important for the shutoff activity. The C-terminus acts as a nuclear localization signal (By similarity). The C-terminus is recruited to host protein complexes involved in nuclear Pol II RNA processing (By similarity).</text>
</comment>
<comment type="similarity">
    <text evidence="5">Belongs to the influenza viruses PA-X family.</text>
</comment>